<organism>
    <name type="scientific">Bos taurus</name>
    <name type="common">Bovine</name>
    <dbReference type="NCBI Taxonomy" id="9913"/>
    <lineage>
        <taxon>Eukaryota</taxon>
        <taxon>Metazoa</taxon>
        <taxon>Chordata</taxon>
        <taxon>Craniata</taxon>
        <taxon>Vertebrata</taxon>
        <taxon>Euteleostomi</taxon>
        <taxon>Mammalia</taxon>
        <taxon>Eutheria</taxon>
        <taxon>Laurasiatheria</taxon>
        <taxon>Artiodactyla</taxon>
        <taxon>Ruminantia</taxon>
        <taxon>Pecora</taxon>
        <taxon>Bovidae</taxon>
        <taxon>Bovinae</taxon>
        <taxon>Bos</taxon>
    </lineage>
</organism>
<proteinExistence type="evidence at transcript level"/>
<dbReference type="EMBL" id="BC102977">
    <property type="protein sequence ID" value="AAI02978.1"/>
    <property type="molecule type" value="mRNA"/>
</dbReference>
<dbReference type="RefSeq" id="NP_001029616.1">
    <property type="nucleotide sequence ID" value="NM_001034444.1"/>
</dbReference>
<dbReference type="RefSeq" id="XP_005202235.1">
    <property type="nucleotide sequence ID" value="XM_005202178.3"/>
</dbReference>
<dbReference type="SMR" id="Q3SZB5"/>
<dbReference type="FunCoup" id="Q3SZB5">
    <property type="interactions" value="4094"/>
</dbReference>
<dbReference type="STRING" id="9913.ENSBTAP00000004187"/>
<dbReference type="PaxDb" id="9913-ENSBTAP00000004187"/>
<dbReference type="GeneID" id="513406"/>
<dbReference type="KEGG" id="bta:513406"/>
<dbReference type="CTD" id="84317"/>
<dbReference type="VEuPathDB" id="HostDB:ENSBTAG00000015841"/>
<dbReference type="eggNOG" id="ENOG502S392">
    <property type="taxonomic scope" value="Eukaryota"/>
</dbReference>
<dbReference type="HOGENOM" id="CLU_107415_0_0_1"/>
<dbReference type="InParanoid" id="Q3SZB5"/>
<dbReference type="OMA" id="RMEPRVC"/>
<dbReference type="OrthoDB" id="408631at2759"/>
<dbReference type="TreeFam" id="TF324647"/>
<dbReference type="Reactome" id="R-BTA-8980692">
    <property type="pathway name" value="RHOA GTPase cycle"/>
</dbReference>
<dbReference type="Proteomes" id="UP000009136">
    <property type="component" value="Chromosome 2"/>
</dbReference>
<dbReference type="Bgee" id="ENSBTAG00000015841">
    <property type="expression patterns" value="Expressed in metanephros cortex and 103 other cell types or tissues"/>
</dbReference>
<dbReference type="GO" id="GO:0030137">
    <property type="term" value="C:COPI-coated vesicle"/>
    <property type="evidence" value="ECO:0000250"/>
    <property type="project" value="UniProtKB"/>
</dbReference>
<dbReference type="GO" id="GO:0005783">
    <property type="term" value="C:endoplasmic reticulum"/>
    <property type="evidence" value="ECO:0000250"/>
    <property type="project" value="UniProtKB"/>
</dbReference>
<dbReference type="GO" id="GO:0005793">
    <property type="term" value="C:endoplasmic reticulum-Golgi intermediate compartment"/>
    <property type="evidence" value="ECO:0000250"/>
    <property type="project" value="UniProtKB"/>
</dbReference>
<dbReference type="GO" id="GO:0005768">
    <property type="term" value="C:endosome"/>
    <property type="evidence" value="ECO:0007669"/>
    <property type="project" value="UniProtKB-SubCell"/>
</dbReference>
<dbReference type="GO" id="GO:0005764">
    <property type="term" value="C:lysosome"/>
    <property type="evidence" value="ECO:0007669"/>
    <property type="project" value="UniProtKB-SubCell"/>
</dbReference>
<dbReference type="GO" id="GO:0016471">
    <property type="term" value="C:vacuolar proton-transporting V-type ATPase complex"/>
    <property type="evidence" value="ECO:0000250"/>
    <property type="project" value="UniProtKB"/>
</dbReference>
<dbReference type="GO" id="GO:0051082">
    <property type="term" value="F:unfolded protein binding"/>
    <property type="evidence" value="ECO:0000318"/>
    <property type="project" value="GO_Central"/>
</dbReference>
<dbReference type="GO" id="GO:0036295">
    <property type="term" value="P:cellular response to increased oxygen levels"/>
    <property type="evidence" value="ECO:0000250"/>
    <property type="project" value="UniProtKB"/>
</dbReference>
<dbReference type="GO" id="GO:0006879">
    <property type="term" value="P:intracellular iron ion homeostasis"/>
    <property type="evidence" value="ECO:0000250"/>
    <property type="project" value="UniProtKB"/>
</dbReference>
<dbReference type="GO" id="GO:0007042">
    <property type="term" value="P:lysosomal lumen acidification"/>
    <property type="evidence" value="ECO:0000250"/>
    <property type="project" value="UniProtKB"/>
</dbReference>
<dbReference type="GO" id="GO:1905146">
    <property type="term" value="P:lysosomal protein catabolic process"/>
    <property type="evidence" value="ECO:0000250"/>
    <property type="project" value="UniProtKB"/>
</dbReference>
<dbReference type="GO" id="GO:0070072">
    <property type="term" value="P:vacuolar proton-transporting V-type ATPase complex assembly"/>
    <property type="evidence" value="ECO:0007669"/>
    <property type="project" value="InterPro"/>
</dbReference>
<dbReference type="FunFam" id="1.10.287.3240:FF:000005">
    <property type="entry name" value="coiled-coil domain-containing protein 115"/>
    <property type="match status" value="1"/>
</dbReference>
<dbReference type="Gene3D" id="1.10.287.3240">
    <property type="match status" value="1"/>
</dbReference>
<dbReference type="InterPro" id="IPR040357">
    <property type="entry name" value="Vma22/CCDC115"/>
</dbReference>
<dbReference type="PANTHER" id="PTHR31996">
    <property type="entry name" value="COILED-COIL DOMAIN-CONTAINING PROTEIN 115"/>
    <property type="match status" value="1"/>
</dbReference>
<dbReference type="PANTHER" id="PTHR31996:SF2">
    <property type="entry name" value="COILED-COIL DOMAIN-CONTAINING PROTEIN 115"/>
    <property type="match status" value="1"/>
</dbReference>
<dbReference type="Pfam" id="PF21730">
    <property type="entry name" value="Vma22_CCDC115"/>
    <property type="match status" value="1"/>
</dbReference>
<reference key="1">
    <citation type="submission" date="2005-08" db="EMBL/GenBank/DDBJ databases">
        <authorList>
            <consortium name="NIH - Mammalian Gene Collection (MGC) project"/>
        </authorList>
    </citation>
    <scope>NUCLEOTIDE SEQUENCE [LARGE SCALE MRNA]</scope>
    <source>
        <strain>Hereford</strain>
        <tissue>Hypothalamus</tissue>
    </source>
</reference>
<evidence type="ECO:0000250" key="1">
    <source>
        <dbReference type="UniProtKB" id="Q8VE99"/>
    </source>
</evidence>
<evidence type="ECO:0000250" key="2">
    <source>
        <dbReference type="UniProtKB" id="Q96NT0"/>
    </source>
</evidence>
<evidence type="ECO:0000255" key="3"/>
<evidence type="ECO:0000256" key="4">
    <source>
        <dbReference type="SAM" id="MobiDB-lite"/>
    </source>
</evidence>
<keyword id="KW-0175">Coiled coil</keyword>
<keyword id="KW-0968">Cytoplasmic vesicle</keyword>
<keyword id="KW-0256">Endoplasmic reticulum</keyword>
<keyword id="KW-0967">Endosome</keyword>
<keyword id="KW-0458">Lysosome</keyword>
<keyword id="KW-1185">Reference proteome</keyword>
<protein>
    <recommendedName>
        <fullName>Vacuolar ATPase assembly protein VMA22</fullName>
    </recommendedName>
    <alternativeName>
        <fullName>Coiled-coil domain-containing protein 115</fullName>
    </alternativeName>
</protein>
<gene>
    <name type="primary">VMA22</name>
    <name type="synonym">CCDC115</name>
</gene>
<name>VMA22_BOVIN</name>
<accession>Q3SZB5</accession>
<feature type="chain" id="PRO_0000279402" description="Vacuolar ATPase assembly protein VMA22">
    <location>
        <begin position="1"/>
        <end position="180"/>
    </location>
</feature>
<feature type="region of interest" description="Disordered" evidence="4">
    <location>
        <begin position="89"/>
        <end position="123"/>
    </location>
</feature>
<feature type="coiled-coil region" evidence="3">
    <location>
        <begin position="13"/>
        <end position="38"/>
    </location>
</feature>
<feature type="coiled-coil region" evidence="3">
    <location>
        <begin position="152"/>
        <end position="176"/>
    </location>
</feature>
<comment type="function">
    <text evidence="2">Accessory component of the proton-transporting vacuolar (V)-ATPase protein pump involved in intracellular iron homeostasis. In aerobic conditions, required for intracellular iron homeostasis, thus triggering the activity of Fe(2+) prolyl hydroxylase (PHD) enzymes, and leading to HIF1A hydroxylation and subsequent proteasomal degradation. Necessary for endolysosomal acidification and lysosomal degradation (By similarity). May be involved in Golgi homeostasis (By similarity).</text>
</comment>
<comment type="subunit">
    <text evidence="2">Accessory component of the multisubunit proton-transporting vacuolar (V)-ATPase protein pump.</text>
</comment>
<comment type="subcellular location">
    <subcellularLocation>
        <location evidence="1">Endosome</location>
    </subcellularLocation>
    <subcellularLocation>
        <location evidence="1">Lysosome</location>
    </subcellularLocation>
    <subcellularLocation>
        <location evidence="2">Endoplasmic reticulum-Golgi intermediate compartment</location>
    </subcellularLocation>
    <subcellularLocation>
        <location evidence="2">Cytoplasmic vesicle</location>
        <location evidence="2">COPI-coated vesicle</location>
    </subcellularLocation>
    <subcellularLocation>
        <location evidence="2">Endoplasmic reticulum</location>
    </subcellularLocation>
</comment>
<sequence length="180" mass="20141">MASRDLRAEVDFVLLQLLGDLEQLEAKRQALNARVEEGWLSLSKARYAMGAKSVGPLQYASHMEPQVRVGTSESQDGLQKFWMVRAGTQTPEEVGSREAALRRRKGLPRTPEPDSSPAPQNPLKWFGILVPHSLRQAQASFREGLQLAADMASLQSRITWGQSQLQELQEKLKQLEPRAP</sequence>